<feature type="transit peptide" description="Mitochondrion" evidence="3">
    <location>
        <begin position="1"/>
        <end position="38"/>
    </location>
</feature>
<feature type="chain" id="PRO_0000012284" description="Methylmalonyl-CoA epimerase, mitochondrial">
    <location>
        <begin position="39"/>
        <end position="178"/>
    </location>
</feature>
<feature type="domain" description="VOC" evidence="4">
    <location>
        <begin position="49"/>
        <end position="178"/>
    </location>
</feature>
<feature type="binding site" evidence="1">
    <location>
        <position position="52"/>
    </location>
    <ligand>
        <name>Co(2+)</name>
        <dbReference type="ChEBI" id="CHEBI:48828"/>
    </ligand>
</feature>
<feature type="binding site" evidence="1">
    <location>
        <position position="124"/>
    </location>
    <ligand>
        <name>Co(2+)</name>
        <dbReference type="ChEBI" id="CHEBI:48828"/>
    </ligand>
</feature>
<feature type="binding site" evidence="1">
    <location>
        <position position="174"/>
    </location>
    <ligand>
        <name>Co(2+)</name>
        <dbReference type="ChEBI" id="CHEBI:48828"/>
    </ligand>
</feature>
<feature type="modified residue" description="N6-succinyllysine" evidence="8">
    <location>
        <position position="116"/>
    </location>
</feature>
<feature type="modified residue" description="N6-acetyllysine; alternate" evidence="7">
    <location>
        <position position="152"/>
    </location>
</feature>
<feature type="modified residue" description="N6-succinyllysine; alternate" evidence="8">
    <location>
        <position position="152"/>
    </location>
</feature>
<gene>
    <name evidence="6" type="primary">Mcee</name>
</gene>
<keyword id="KW-0007">Acetylation</keyword>
<keyword id="KW-0170">Cobalt</keyword>
<keyword id="KW-0413">Isomerase</keyword>
<keyword id="KW-0479">Metal-binding</keyword>
<keyword id="KW-0496">Mitochondrion</keyword>
<keyword id="KW-1185">Reference proteome</keyword>
<keyword id="KW-0809">Transit peptide</keyword>
<comment type="function">
    <text evidence="2">Methylmalonyl-CoA epimerase involved in propionyl-CoA metabolism.</text>
</comment>
<comment type="catalytic activity">
    <reaction evidence="2">
        <text>(R)-methylmalonyl-CoA = (S)-methylmalonyl-CoA</text>
        <dbReference type="Rhea" id="RHEA:20553"/>
        <dbReference type="ChEBI" id="CHEBI:57326"/>
        <dbReference type="ChEBI" id="CHEBI:57327"/>
        <dbReference type="EC" id="5.1.99.1"/>
    </reaction>
    <physiologicalReaction direction="right-to-left" evidence="2">
        <dbReference type="Rhea" id="RHEA:20555"/>
    </physiologicalReaction>
</comment>
<comment type="subcellular location">
    <subcellularLocation>
        <location evidence="5">Mitochondrion</location>
    </subcellularLocation>
</comment>
<comment type="similarity">
    <text evidence="5">Belongs to the methylmalonyl-CoA epimerase family.</text>
</comment>
<organism>
    <name type="scientific">Mus musculus</name>
    <name type="common">Mouse</name>
    <dbReference type="NCBI Taxonomy" id="10090"/>
    <lineage>
        <taxon>Eukaryota</taxon>
        <taxon>Metazoa</taxon>
        <taxon>Chordata</taxon>
        <taxon>Craniata</taxon>
        <taxon>Vertebrata</taxon>
        <taxon>Euteleostomi</taxon>
        <taxon>Mammalia</taxon>
        <taxon>Eutheria</taxon>
        <taxon>Euarchontoglires</taxon>
        <taxon>Glires</taxon>
        <taxon>Rodentia</taxon>
        <taxon>Myomorpha</taxon>
        <taxon>Muroidea</taxon>
        <taxon>Muridae</taxon>
        <taxon>Murinae</taxon>
        <taxon>Mus</taxon>
        <taxon>Mus</taxon>
    </lineage>
</organism>
<sequence length="178" mass="19017">MRRVVKAAALAAGATGLFSRVQTSVAIGRSFSTPQSQFQESSPVWKLGRLNHVAVAVPDLEKASSFYRDVLGAQVSEVVPLPEHGVSVVFVNLGNTKMELLHPLGSDSPITGFLQKNKAGGMHHVCIEVDNISAAVMDLKKKKIRSLSDEAKIGAHGKPVIFLHPKDCGGVLVELEQA</sequence>
<evidence type="ECO:0000250" key="1"/>
<evidence type="ECO:0000250" key="2">
    <source>
        <dbReference type="UniProtKB" id="Q96PE7"/>
    </source>
</evidence>
<evidence type="ECO:0000255" key="3"/>
<evidence type="ECO:0000255" key="4">
    <source>
        <dbReference type="PROSITE-ProRule" id="PRU01163"/>
    </source>
</evidence>
<evidence type="ECO:0000305" key="5"/>
<evidence type="ECO:0000312" key="6">
    <source>
        <dbReference type="MGI" id="MGI:1920974"/>
    </source>
</evidence>
<evidence type="ECO:0007744" key="7">
    <source>
    </source>
</evidence>
<evidence type="ECO:0007744" key="8">
    <source>
    </source>
</evidence>
<protein>
    <recommendedName>
        <fullName evidence="5">Methylmalonyl-CoA epimerase, mitochondrial</fullName>
        <ecNumber evidence="2">5.1.99.1</ecNumber>
    </recommendedName>
    <alternativeName>
        <fullName>DL-methylmalonyl-CoA racemase</fullName>
    </alternativeName>
</protein>
<reference key="1">
    <citation type="journal article" date="2005" name="Science">
        <title>The transcriptional landscape of the mammalian genome.</title>
        <authorList>
            <person name="Carninci P."/>
            <person name="Kasukawa T."/>
            <person name="Katayama S."/>
            <person name="Gough J."/>
            <person name="Frith M.C."/>
            <person name="Maeda N."/>
            <person name="Oyama R."/>
            <person name="Ravasi T."/>
            <person name="Lenhard B."/>
            <person name="Wells C."/>
            <person name="Kodzius R."/>
            <person name="Shimokawa K."/>
            <person name="Bajic V.B."/>
            <person name="Brenner S.E."/>
            <person name="Batalov S."/>
            <person name="Forrest A.R."/>
            <person name="Zavolan M."/>
            <person name="Davis M.J."/>
            <person name="Wilming L.G."/>
            <person name="Aidinis V."/>
            <person name="Allen J.E."/>
            <person name="Ambesi-Impiombato A."/>
            <person name="Apweiler R."/>
            <person name="Aturaliya R.N."/>
            <person name="Bailey T.L."/>
            <person name="Bansal M."/>
            <person name="Baxter L."/>
            <person name="Beisel K.W."/>
            <person name="Bersano T."/>
            <person name="Bono H."/>
            <person name="Chalk A.M."/>
            <person name="Chiu K.P."/>
            <person name="Choudhary V."/>
            <person name="Christoffels A."/>
            <person name="Clutterbuck D.R."/>
            <person name="Crowe M.L."/>
            <person name="Dalla E."/>
            <person name="Dalrymple B.P."/>
            <person name="de Bono B."/>
            <person name="Della Gatta G."/>
            <person name="di Bernardo D."/>
            <person name="Down T."/>
            <person name="Engstrom P."/>
            <person name="Fagiolini M."/>
            <person name="Faulkner G."/>
            <person name="Fletcher C.F."/>
            <person name="Fukushima T."/>
            <person name="Furuno M."/>
            <person name="Futaki S."/>
            <person name="Gariboldi M."/>
            <person name="Georgii-Hemming P."/>
            <person name="Gingeras T.R."/>
            <person name="Gojobori T."/>
            <person name="Green R.E."/>
            <person name="Gustincich S."/>
            <person name="Harbers M."/>
            <person name="Hayashi Y."/>
            <person name="Hensch T.K."/>
            <person name="Hirokawa N."/>
            <person name="Hill D."/>
            <person name="Huminiecki L."/>
            <person name="Iacono M."/>
            <person name="Ikeo K."/>
            <person name="Iwama A."/>
            <person name="Ishikawa T."/>
            <person name="Jakt M."/>
            <person name="Kanapin A."/>
            <person name="Katoh M."/>
            <person name="Kawasawa Y."/>
            <person name="Kelso J."/>
            <person name="Kitamura H."/>
            <person name="Kitano H."/>
            <person name="Kollias G."/>
            <person name="Krishnan S.P."/>
            <person name="Kruger A."/>
            <person name="Kummerfeld S.K."/>
            <person name="Kurochkin I.V."/>
            <person name="Lareau L.F."/>
            <person name="Lazarevic D."/>
            <person name="Lipovich L."/>
            <person name="Liu J."/>
            <person name="Liuni S."/>
            <person name="McWilliam S."/>
            <person name="Madan Babu M."/>
            <person name="Madera M."/>
            <person name="Marchionni L."/>
            <person name="Matsuda H."/>
            <person name="Matsuzawa S."/>
            <person name="Miki H."/>
            <person name="Mignone F."/>
            <person name="Miyake S."/>
            <person name="Morris K."/>
            <person name="Mottagui-Tabar S."/>
            <person name="Mulder N."/>
            <person name="Nakano N."/>
            <person name="Nakauchi H."/>
            <person name="Ng P."/>
            <person name="Nilsson R."/>
            <person name="Nishiguchi S."/>
            <person name="Nishikawa S."/>
            <person name="Nori F."/>
            <person name="Ohara O."/>
            <person name="Okazaki Y."/>
            <person name="Orlando V."/>
            <person name="Pang K.C."/>
            <person name="Pavan W.J."/>
            <person name="Pavesi G."/>
            <person name="Pesole G."/>
            <person name="Petrovsky N."/>
            <person name="Piazza S."/>
            <person name="Reed J."/>
            <person name="Reid J.F."/>
            <person name="Ring B.Z."/>
            <person name="Ringwald M."/>
            <person name="Rost B."/>
            <person name="Ruan Y."/>
            <person name="Salzberg S.L."/>
            <person name="Sandelin A."/>
            <person name="Schneider C."/>
            <person name="Schoenbach C."/>
            <person name="Sekiguchi K."/>
            <person name="Semple C.A."/>
            <person name="Seno S."/>
            <person name="Sessa L."/>
            <person name="Sheng Y."/>
            <person name="Shibata Y."/>
            <person name="Shimada H."/>
            <person name="Shimada K."/>
            <person name="Silva D."/>
            <person name="Sinclair B."/>
            <person name="Sperling S."/>
            <person name="Stupka E."/>
            <person name="Sugiura K."/>
            <person name="Sultana R."/>
            <person name="Takenaka Y."/>
            <person name="Taki K."/>
            <person name="Tammoja K."/>
            <person name="Tan S.L."/>
            <person name="Tang S."/>
            <person name="Taylor M.S."/>
            <person name="Tegner J."/>
            <person name="Teichmann S.A."/>
            <person name="Ueda H.R."/>
            <person name="van Nimwegen E."/>
            <person name="Verardo R."/>
            <person name="Wei C.L."/>
            <person name="Yagi K."/>
            <person name="Yamanishi H."/>
            <person name="Zabarovsky E."/>
            <person name="Zhu S."/>
            <person name="Zimmer A."/>
            <person name="Hide W."/>
            <person name="Bult C."/>
            <person name="Grimmond S.M."/>
            <person name="Teasdale R.D."/>
            <person name="Liu E.T."/>
            <person name="Brusic V."/>
            <person name="Quackenbush J."/>
            <person name="Wahlestedt C."/>
            <person name="Mattick J.S."/>
            <person name="Hume D.A."/>
            <person name="Kai C."/>
            <person name="Sasaki D."/>
            <person name="Tomaru Y."/>
            <person name="Fukuda S."/>
            <person name="Kanamori-Katayama M."/>
            <person name="Suzuki M."/>
            <person name="Aoki J."/>
            <person name="Arakawa T."/>
            <person name="Iida J."/>
            <person name="Imamura K."/>
            <person name="Itoh M."/>
            <person name="Kato T."/>
            <person name="Kawaji H."/>
            <person name="Kawagashira N."/>
            <person name="Kawashima T."/>
            <person name="Kojima M."/>
            <person name="Kondo S."/>
            <person name="Konno H."/>
            <person name="Nakano K."/>
            <person name="Ninomiya N."/>
            <person name="Nishio T."/>
            <person name="Okada M."/>
            <person name="Plessy C."/>
            <person name="Shibata K."/>
            <person name="Shiraki T."/>
            <person name="Suzuki S."/>
            <person name="Tagami M."/>
            <person name="Waki K."/>
            <person name="Watahiki A."/>
            <person name="Okamura-Oho Y."/>
            <person name="Suzuki H."/>
            <person name="Kawai J."/>
            <person name="Hayashizaki Y."/>
        </authorList>
    </citation>
    <scope>NUCLEOTIDE SEQUENCE [LARGE SCALE MRNA]</scope>
    <source>
        <strain>C57BL/6J</strain>
        <tissue>Embryo</tissue>
    </source>
</reference>
<reference key="2">
    <citation type="journal article" date="2004" name="Genome Res.">
        <title>The status, quality, and expansion of the NIH full-length cDNA project: the Mammalian Gene Collection (MGC).</title>
        <authorList>
            <consortium name="The MGC Project Team"/>
        </authorList>
    </citation>
    <scope>NUCLEOTIDE SEQUENCE [LARGE SCALE MRNA]</scope>
    <source>
        <tissue>Uterus</tissue>
    </source>
</reference>
<reference key="3">
    <citation type="journal article" date="2010" name="Cell">
        <title>A tissue-specific atlas of mouse protein phosphorylation and expression.</title>
        <authorList>
            <person name="Huttlin E.L."/>
            <person name="Jedrychowski M.P."/>
            <person name="Elias J.E."/>
            <person name="Goswami T."/>
            <person name="Rad R."/>
            <person name="Beausoleil S.A."/>
            <person name="Villen J."/>
            <person name="Haas W."/>
            <person name="Sowa M.E."/>
            <person name="Gygi S.P."/>
        </authorList>
    </citation>
    <scope>IDENTIFICATION BY MASS SPECTROMETRY [LARGE SCALE ANALYSIS]</scope>
    <source>
        <tissue>Brain</tissue>
        <tissue>Brown adipose tissue</tissue>
        <tissue>Heart</tissue>
        <tissue>Kidney</tissue>
        <tissue>Liver</tissue>
        <tissue>Lung</tissue>
        <tissue>Pancreas</tissue>
    </source>
</reference>
<reference key="4">
    <citation type="journal article" date="2013" name="Mol. Cell">
        <title>SIRT5-mediated lysine desuccinylation impacts diverse metabolic pathways.</title>
        <authorList>
            <person name="Park J."/>
            <person name="Chen Y."/>
            <person name="Tishkoff D.X."/>
            <person name="Peng C."/>
            <person name="Tan M."/>
            <person name="Dai L."/>
            <person name="Xie Z."/>
            <person name="Zhang Y."/>
            <person name="Zwaans B.M."/>
            <person name="Skinner M.E."/>
            <person name="Lombard D.B."/>
            <person name="Zhao Y."/>
        </authorList>
    </citation>
    <scope>SUCCINYLATION [LARGE SCALE ANALYSIS] AT LYS-116 AND LYS-152</scope>
    <scope>IDENTIFICATION BY MASS SPECTROMETRY [LARGE SCALE ANALYSIS]</scope>
    <source>
        <tissue>Liver</tissue>
    </source>
</reference>
<reference key="5">
    <citation type="journal article" date="2013" name="Proc. Natl. Acad. Sci. U.S.A.">
        <title>Label-free quantitative proteomics of the lysine acetylome in mitochondria identifies substrates of SIRT3 in metabolic pathways.</title>
        <authorList>
            <person name="Rardin M.J."/>
            <person name="Newman J.C."/>
            <person name="Held J.M."/>
            <person name="Cusack M.P."/>
            <person name="Sorensen D.J."/>
            <person name="Li B."/>
            <person name="Schilling B."/>
            <person name="Mooney S.D."/>
            <person name="Kahn C.R."/>
            <person name="Verdin E."/>
            <person name="Gibson B.W."/>
        </authorList>
    </citation>
    <scope>ACETYLATION [LARGE SCALE ANALYSIS] AT LYS-152</scope>
    <scope>IDENTIFICATION BY MASS SPECTROMETRY [LARGE SCALE ANALYSIS]</scope>
    <source>
        <tissue>Liver</tissue>
    </source>
</reference>
<proteinExistence type="evidence at protein level"/>
<dbReference type="EC" id="5.1.99.1" evidence="2"/>
<dbReference type="EMBL" id="AK003511">
    <property type="protein sequence ID" value="BAB22828.1"/>
    <property type="molecule type" value="mRNA"/>
</dbReference>
<dbReference type="EMBL" id="BC038157">
    <property type="protein sequence ID" value="AAH38157.1"/>
    <property type="molecule type" value="mRNA"/>
</dbReference>
<dbReference type="CCDS" id="CCDS21334.1"/>
<dbReference type="RefSeq" id="NP_082902.1">
    <property type="nucleotide sequence ID" value="NM_028626.2"/>
</dbReference>
<dbReference type="SMR" id="Q9D1I5"/>
<dbReference type="FunCoup" id="Q9D1I5">
    <property type="interactions" value="1107"/>
</dbReference>
<dbReference type="STRING" id="10090.ENSMUSP00000047855"/>
<dbReference type="GlyGen" id="Q9D1I5">
    <property type="glycosylation" value="1 site, 1 O-linked glycan (1 site)"/>
</dbReference>
<dbReference type="iPTMnet" id="Q9D1I5"/>
<dbReference type="PhosphoSitePlus" id="Q9D1I5"/>
<dbReference type="jPOST" id="Q9D1I5"/>
<dbReference type="PaxDb" id="10090-ENSMUSP00000047855"/>
<dbReference type="PeptideAtlas" id="Q9D1I5"/>
<dbReference type="ProteomicsDB" id="295978"/>
<dbReference type="Pumba" id="Q9D1I5"/>
<dbReference type="Antibodypedia" id="31195">
    <property type="antibodies" value="207 antibodies from 22 providers"/>
</dbReference>
<dbReference type="DNASU" id="73724"/>
<dbReference type="Ensembl" id="ENSMUST00000037205.11">
    <property type="protein sequence ID" value="ENSMUSP00000047855.9"/>
    <property type="gene ID" value="ENSMUSG00000033429.11"/>
</dbReference>
<dbReference type="GeneID" id="73724"/>
<dbReference type="KEGG" id="mmu:73724"/>
<dbReference type="UCSC" id="uc009hgi.1">
    <property type="organism name" value="mouse"/>
</dbReference>
<dbReference type="AGR" id="MGI:1920974"/>
<dbReference type="CTD" id="84693"/>
<dbReference type="MGI" id="MGI:1920974">
    <property type="gene designation" value="Mcee"/>
</dbReference>
<dbReference type="VEuPathDB" id="HostDB:ENSMUSG00000033429"/>
<dbReference type="eggNOG" id="KOG2944">
    <property type="taxonomic scope" value="Eukaryota"/>
</dbReference>
<dbReference type="GeneTree" id="ENSGT00940000153941"/>
<dbReference type="HOGENOM" id="CLU_046006_5_0_1"/>
<dbReference type="InParanoid" id="Q9D1I5"/>
<dbReference type="OMA" id="IHHICYE"/>
<dbReference type="OrthoDB" id="16820at2759"/>
<dbReference type="PhylomeDB" id="Q9D1I5"/>
<dbReference type="TreeFam" id="TF313417"/>
<dbReference type="Reactome" id="R-MMU-71032">
    <property type="pathway name" value="Propionyl-CoA catabolism"/>
</dbReference>
<dbReference type="BioGRID-ORCS" id="73724">
    <property type="hits" value="1 hit in 77 CRISPR screens"/>
</dbReference>
<dbReference type="ChiTaRS" id="Mcee">
    <property type="organism name" value="mouse"/>
</dbReference>
<dbReference type="PRO" id="PR:Q9D1I5"/>
<dbReference type="Proteomes" id="UP000000589">
    <property type="component" value="Chromosome 7"/>
</dbReference>
<dbReference type="RNAct" id="Q9D1I5">
    <property type="molecule type" value="protein"/>
</dbReference>
<dbReference type="Bgee" id="ENSMUSG00000033429">
    <property type="expression patterns" value="Expressed in right kidney and 257 other cell types or tissues"/>
</dbReference>
<dbReference type="ExpressionAtlas" id="Q9D1I5">
    <property type="expression patterns" value="baseline and differential"/>
</dbReference>
<dbReference type="GO" id="GO:0005739">
    <property type="term" value="C:mitochondrion"/>
    <property type="evidence" value="ECO:0007005"/>
    <property type="project" value="MGI"/>
</dbReference>
<dbReference type="GO" id="GO:0046872">
    <property type="term" value="F:metal ion binding"/>
    <property type="evidence" value="ECO:0007669"/>
    <property type="project" value="UniProtKB-KW"/>
</dbReference>
<dbReference type="GO" id="GO:0004493">
    <property type="term" value="F:methylmalonyl-CoA epimerase activity"/>
    <property type="evidence" value="ECO:0007669"/>
    <property type="project" value="UniProtKB-EC"/>
</dbReference>
<dbReference type="GO" id="GO:0046491">
    <property type="term" value="P:L-methylmalonyl-CoA metabolic process"/>
    <property type="evidence" value="ECO:0007669"/>
    <property type="project" value="Ensembl"/>
</dbReference>
<dbReference type="CDD" id="cd07249">
    <property type="entry name" value="MMCE"/>
    <property type="match status" value="1"/>
</dbReference>
<dbReference type="FunFam" id="3.10.180.10:FF:000003">
    <property type="entry name" value="Methylmalonyl-CoA epimerase, mitochondrial"/>
    <property type="match status" value="1"/>
</dbReference>
<dbReference type="Gene3D" id="3.10.180.10">
    <property type="entry name" value="2,3-Dihydroxybiphenyl 1,2-Dioxygenase, domain 1"/>
    <property type="match status" value="1"/>
</dbReference>
<dbReference type="InterPro" id="IPR029068">
    <property type="entry name" value="Glyas_Bleomycin-R_OHBP_Dase"/>
</dbReference>
<dbReference type="InterPro" id="IPR017515">
    <property type="entry name" value="MeMalonyl-CoA_epimerase"/>
</dbReference>
<dbReference type="InterPro" id="IPR051785">
    <property type="entry name" value="MMCE/EMCE_epimerase"/>
</dbReference>
<dbReference type="InterPro" id="IPR037523">
    <property type="entry name" value="VOC"/>
</dbReference>
<dbReference type="NCBIfam" id="TIGR03081">
    <property type="entry name" value="metmalonyl_epim"/>
    <property type="match status" value="1"/>
</dbReference>
<dbReference type="PANTHER" id="PTHR43048">
    <property type="entry name" value="METHYLMALONYL-COA EPIMERASE"/>
    <property type="match status" value="1"/>
</dbReference>
<dbReference type="PANTHER" id="PTHR43048:SF3">
    <property type="entry name" value="METHYLMALONYL-COA EPIMERASE, MITOCHONDRIAL"/>
    <property type="match status" value="1"/>
</dbReference>
<dbReference type="Pfam" id="PF13669">
    <property type="entry name" value="Glyoxalase_4"/>
    <property type="match status" value="1"/>
</dbReference>
<dbReference type="SUPFAM" id="SSF54593">
    <property type="entry name" value="Glyoxalase/Bleomycin resistance protein/Dihydroxybiphenyl dioxygenase"/>
    <property type="match status" value="1"/>
</dbReference>
<dbReference type="PROSITE" id="PS51819">
    <property type="entry name" value="VOC"/>
    <property type="match status" value="1"/>
</dbReference>
<name>MCEE_MOUSE</name>
<accession>Q9D1I5</accession>